<evidence type="ECO:0000255" key="1">
    <source>
        <dbReference type="HAMAP-Rule" id="MF_01341"/>
    </source>
</evidence>
<evidence type="ECO:0000256" key="2">
    <source>
        <dbReference type="SAM" id="MobiDB-lite"/>
    </source>
</evidence>
<evidence type="ECO:0000305" key="3"/>
<keyword id="KW-1185">Reference proteome</keyword>
<keyword id="KW-0687">Ribonucleoprotein</keyword>
<keyword id="KW-0689">Ribosomal protein</keyword>
<keyword id="KW-0694">RNA-binding</keyword>
<keyword id="KW-0699">rRNA-binding</keyword>
<accession>B7IHW5</accession>
<dbReference type="EMBL" id="CP001185">
    <property type="protein sequence ID" value="ACJ75679.1"/>
    <property type="molecule type" value="Genomic_DNA"/>
</dbReference>
<dbReference type="RefSeq" id="WP_004101471.1">
    <property type="nucleotide sequence ID" value="NC_011653.1"/>
</dbReference>
<dbReference type="SMR" id="B7IHW5"/>
<dbReference type="STRING" id="484019.THA_1234"/>
<dbReference type="KEGG" id="taf:THA_1234"/>
<dbReference type="eggNOG" id="COG0200">
    <property type="taxonomic scope" value="Bacteria"/>
</dbReference>
<dbReference type="HOGENOM" id="CLU_055188_4_2_0"/>
<dbReference type="OrthoDB" id="9810293at2"/>
<dbReference type="Proteomes" id="UP000002453">
    <property type="component" value="Chromosome"/>
</dbReference>
<dbReference type="GO" id="GO:0022625">
    <property type="term" value="C:cytosolic large ribosomal subunit"/>
    <property type="evidence" value="ECO:0007669"/>
    <property type="project" value="TreeGrafter"/>
</dbReference>
<dbReference type="GO" id="GO:0019843">
    <property type="term" value="F:rRNA binding"/>
    <property type="evidence" value="ECO:0007669"/>
    <property type="project" value="UniProtKB-UniRule"/>
</dbReference>
<dbReference type="GO" id="GO:0003735">
    <property type="term" value="F:structural constituent of ribosome"/>
    <property type="evidence" value="ECO:0007669"/>
    <property type="project" value="InterPro"/>
</dbReference>
<dbReference type="GO" id="GO:0006412">
    <property type="term" value="P:translation"/>
    <property type="evidence" value="ECO:0007669"/>
    <property type="project" value="UniProtKB-UniRule"/>
</dbReference>
<dbReference type="FunFam" id="3.100.10.10:FF:000005">
    <property type="entry name" value="50S ribosomal protein L15"/>
    <property type="match status" value="1"/>
</dbReference>
<dbReference type="Gene3D" id="3.100.10.10">
    <property type="match status" value="1"/>
</dbReference>
<dbReference type="HAMAP" id="MF_01341">
    <property type="entry name" value="Ribosomal_uL15"/>
    <property type="match status" value="1"/>
</dbReference>
<dbReference type="InterPro" id="IPR030878">
    <property type="entry name" value="Ribosomal_uL15"/>
</dbReference>
<dbReference type="InterPro" id="IPR021131">
    <property type="entry name" value="Ribosomal_uL15/eL18"/>
</dbReference>
<dbReference type="InterPro" id="IPR036227">
    <property type="entry name" value="Ribosomal_uL15/eL18_sf"/>
</dbReference>
<dbReference type="InterPro" id="IPR005749">
    <property type="entry name" value="Ribosomal_uL15_bac-type"/>
</dbReference>
<dbReference type="InterPro" id="IPR001196">
    <property type="entry name" value="Ribosomal_uL15_CS"/>
</dbReference>
<dbReference type="NCBIfam" id="TIGR01071">
    <property type="entry name" value="rplO_bact"/>
    <property type="match status" value="1"/>
</dbReference>
<dbReference type="PANTHER" id="PTHR12934">
    <property type="entry name" value="50S RIBOSOMAL PROTEIN L15"/>
    <property type="match status" value="1"/>
</dbReference>
<dbReference type="PANTHER" id="PTHR12934:SF11">
    <property type="entry name" value="LARGE RIBOSOMAL SUBUNIT PROTEIN UL15M"/>
    <property type="match status" value="1"/>
</dbReference>
<dbReference type="Pfam" id="PF00828">
    <property type="entry name" value="Ribosomal_L27A"/>
    <property type="match status" value="1"/>
</dbReference>
<dbReference type="SUPFAM" id="SSF52080">
    <property type="entry name" value="Ribosomal proteins L15p and L18e"/>
    <property type="match status" value="1"/>
</dbReference>
<dbReference type="PROSITE" id="PS00475">
    <property type="entry name" value="RIBOSOMAL_L15"/>
    <property type="match status" value="1"/>
</dbReference>
<name>RL15_THEAB</name>
<feature type="chain" id="PRO_1000142891" description="Large ribosomal subunit protein uL15">
    <location>
        <begin position="1"/>
        <end position="147"/>
    </location>
</feature>
<feature type="region of interest" description="Disordered" evidence="2">
    <location>
        <begin position="20"/>
        <end position="54"/>
    </location>
</feature>
<feature type="compositionally biased region" description="Basic residues" evidence="2">
    <location>
        <begin position="30"/>
        <end position="44"/>
    </location>
</feature>
<gene>
    <name evidence="1" type="primary">rplO</name>
    <name type="ordered locus">THA_1234</name>
</gene>
<protein>
    <recommendedName>
        <fullName evidence="1">Large ribosomal subunit protein uL15</fullName>
    </recommendedName>
    <alternativeName>
        <fullName evidence="3">50S ribosomal protein L15</fullName>
    </alternativeName>
</protein>
<organism>
    <name type="scientific">Thermosipho africanus (strain TCF52B)</name>
    <dbReference type="NCBI Taxonomy" id="484019"/>
    <lineage>
        <taxon>Bacteria</taxon>
        <taxon>Thermotogati</taxon>
        <taxon>Thermotogota</taxon>
        <taxon>Thermotogae</taxon>
        <taxon>Thermotogales</taxon>
        <taxon>Fervidobacteriaceae</taxon>
        <taxon>Thermosipho</taxon>
    </lineage>
</organism>
<proteinExistence type="inferred from homology"/>
<sequence>MRLSDIRPTPGSMRKRIRVGRGIGSGKGKTSGKGHKGQKARGTGKVHPWFEGGQTPIHRRLPKFGFKNFTKKVYTVVNVEDLERKFNSGDEVTPEKLLEVGLIKKINDGVKILGNGEITKPLTVVAHAFSSSARRKIEAVGGKAEVI</sequence>
<reference key="1">
    <citation type="journal article" date="2009" name="J. Bacteriol.">
        <title>The genome of Thermosipho africanus TCF52B: lateral genetic connections to the Firmicutes and Archaea.</title>
        <authorList>
            <person name="Nesboe C.L."/>
            <person name="Bapteste E."/>
            <person name="Curtis B."/>
            <person name="Dahle H."/>
            <person name="Lopez P."/>
            <person name="Macleod D."/>
            <person name="Dlutek M."/>
            <person name="Bowman S."/>
            <person name="Zhaxybayeva O."/>
            <person name="Birkeland N.-K."/>
            <person name="Doolittle W.F."/>
        </authorList>
    </citation>
    <scope>NUCLEOTIDE SEQUENCE [LARGE SCALE GENOMIC DNA]</scope>
    <source>
        <strain>TCF52B</strain>
    </source>
</reference>
<comment type="function">
    <text evidence="1">Binds to the 23S rRNA.</text>
</comment>
<comment type="subunit">
    <text evidence="1">Part of the 50S ribosomal subunit.</text>
</comment>
<comment type="similarity">
    <text evidence="1">Belongs to the universal ribosomal protein uL15 family.</text>
</comment>